<organism>
    <name type="scientific">Mus musculus</name>
    <name type="common">Mouse</name>
    <dbReference type="NCBI Taxonomy" id="10090"/>
    <lineage>
        <taxon>Eukaryota</taxon>
        <taxon>Metazoa</taxon>
        <taxon>Chordata</taxon>
        <taxon>Craniata</taxon>
        <taxon>Vertebrata</taxon>
        <taxon>Euteleostomi</taxon>
        <taxon>Mammalia</taxon>
        <taxon>Eutheria</taxon>
        <taxon>Euarchontoglires</taxon>
        <taxon>Glires</taxon>
        <taxon>Rodentia</taxon>
        <taxon>Myomorpha</taxon>
        <taxon>Muroidea</taxon>
        <taxon>Muridae</taxon>
        <taxon>Murinae</taxon>
        <taxon>Mus</taxon>
        <taxon>Mus</taxon>
    </lineage>
</organism>
<dbReference type="EC" id="3.4.19.3"/>
<dbReference type="EMBL" id="AJ278829">
    <property type="protein sequence ID" value="CAC03615.1"/>
    <property type="molecule type" value="mRNA"/>
</dbReference>
<dbReference type="EMBL" id="AK003373">
    <property type="protein sequence ID" value="BAB22746.1"/>
    <property type="molecule type" value="mRNA"/>
</dbReference>
<dbReference type="EMBL" id="AK012658">
    <property type="protein sequence ID" value="BAB28388.1"/>
    <property type="molecule type" value="mRNA"/>
</dbReference>
<dbReference type="EMBL" id="AK047835">
    <property type="protein sequence ID" value="BAC33170.1"/>
    <property type="molecule type" value="mRNA"/>
</dbReference>
<dbReference type="EMBL" id="AK049632">
    <property type="protein sequence ID" value="BAC33848.1"/>
    <property type="molecule type" value="mRNA"/>
</dbReference>
<dbReference type="EMBL" id="BC051938">
    <property type="protein sequence ID" value="AAH51938.1"/>
    <property type="molecule type" value="mRNA"/>
</dbReference>
<dbReference type="CCDS" id="CCDS22377.1"/>
<dbReference type="RefSeq" id="NP_075706.1">
    <property type="nucleotide sequence ID" value="NM_023217.4"/>
</dbReference>
<dbReference type="SMR" id="Q9ESW8"/>
<dbReference type="BioGRID" id="211533">
    <property type="interactions" value="2"/>
</dbReference>
<dbReference type="FunCoup" id="Q9ESW8">
    <property type="interactions" value="429"/>
</dbReference>
<dbReference type="STRING" id="10090.ENSMUSP00000070778"/>
<dbReference type="MEROPS" id="C15.010"/>
<dbReference type="iPTMnet" id="Q9ESW8"/>
<dbReference type="PhosphoSitePlus" id="Q9ESW8"/>
<dbReference type="SwissPalm" id="Q9ESW8"/>
<dbReference type="jPOST" id="Q9ESW8"/>
<dbReference type="PaxDb" id="10090-ENSMUSP00000070778"/>
<dbReference type="PeptideAtlas" id="Q9ESW8"/>
<dbReference type="ProteomicsDB" id="289479"/>
<dbReference type="Pumba" id="Q9ESW8"/>
<dbReference type="Antibodypedia" id="28025">
    <property type="antibodies" value="108 antibodies from 21 providers"/>
</dbReference>
<dbReference type="DNASU" id="66522"/>
<dbReference type="Ensembl" id="ENSMUST00000070173.9">
    <property type="protein sequence ID" value="ENSMUSP00000070778.8"/>
    <property type="gene ID" value="ENSMUSG00000056204.9"/>
</dbReference>
<dbReference type="GeneID" id="66522"/>
<dbReference type="KEGG" id="mmu:66522"/>
<dbReference type="UCSC" id="uc009mbc.2">
    <property type="organism name" value="mouse"/>
</dbReference>
<dbReference type="AGR" id="MGI:1913772"/>
<dbReference type="CTD" id="54858"/>
<dbReference type="MGI" id="MGI:1913772">
    <property type="gene designation" value="Pgpep1"/>
</dbReference>
<dbReference type="VEuPathDB" id="HostDB:ENSMUSG00000056204"/>
<dbReference type="eggNOG" id="KOG4755">
    <property type="taxonomic scope" value="Eukaryota"/>
</dbReference>
<dbReference type="GeneTree" id="ENSGT00390000015368"/>
<dbReference type="HOGENOM" id="CLU_043960_3_1_1"/>
<dbReference type="InParanoid" id="Q9ESW8"/>
<dbReference type="OMA" id="KLAYNHK"/>
<dbReference type="OrthoDB" id="407146at2759"/>
<dbReference type="PhylomeDB" id="Q9ESW8"/>
<dbReference type="TreeFam" id="TF313278"/>
<dbReference type="BRENDA" id="3.4.19.3">
    <property type="organism ID" value="3474"/>
</dbReference>
<dbReference type="SABIO-RK" id="Q9ESW8"/>
<dbReference type="BioGRID-ORCS" id="66522">
    <property type="hits" value="2 hits in 76 CRISPR screens"/>
</dbReference>
<dbReference type="PRO" id="PR:Q9ESW8"/>
<dbReference type="Proteomes" id="UP000000589">
    <property type="component" value="Chromosome 8"/>
</dbReference>
<dbReference type="RNAct" id="Q9ESW8">
    <property type="molecule type" value="protein"/>
</dbReference>
<dbReference type="Bgee" id="ENSMUSG00000056204">
    <property type="expression patterns" value="Expressed in right kidney and 227 other cell types or tissues"/>
</dbReference>
<dbReference type="ExpressionAtlas" id="Q9ESW8">
    <property type="expression patterns" value="baseline and differential"/>
</dbReference>
<dbReference type="GO" id="GO:0005829">
    <property type="term" value="C:cytosol"/>
    <property type="evidence" value="ECO:0007669"/>
    <property type="project" value="InterPro"/>
</dbReference>
<dbReference type="GO" id="GO:0008233">
    <property type="term" value="F:peptidase activity"/>
    <property type="evidence" value="ECO:0000266"/>
    <property type="project" value="MGI"/>
</dbReference>
<dbReference type="GO" id="GO:0016920">
    <property type="term" value="F:pyroglutamyl-peptidase activity"/>
    <property type="evidence" value="ECO:0007669"/>
    <property type="project" value="UniProtKB-EC"/>
</dbReference>
<dbReference type="GO" id="GO:0030163">
    <property type="term" value="P:protein catabolic process"/>
    <property type="evidence" value="ECO:0007669"/>
    <property type="project" value="Ensembl"/>
</dbReference>
<dbReference type="GO" id="GO:0006508">
    <property type="term" value="P:proteolysis"/>
    <property type="evidence" value="ECO:0000266"/>
    <property type="project" value="MGI"/>
</dbReference>
<dbReference type="CDD" id="cd00501">
    <property type="entry name" value="Peptidase_C15"/>
    <property type="match status" value="1"/>
</dbReference>
<dbReference type="FunFam" id="3.40.630.20:FF:000002">
    <property type="entry name" value="Pyroglutamyl-peptidase 1"/>
    <property type="match status" value="1"/>
</dbReference>
<dbReference type="Gene3D" id="3.40.630.20">
    <property type="entry name" value="Peptidase C15, pyroglutamyl peptidase I-like"/>
    <property type="match status" value="1"/>
</dbReference>
<dbReference type="InterPro" id="IPR000816">
    <property type="entry name" value="Peptidase_C15"/>
</dbReference>
<dbReference type="InterPro" id="IPR016125">
    <property type="entry name" value="Peptidase_C15-like"/>
</dbReference>
<dbReference type="InterPro" id="IPR036440">
    <property type="entry name" value="Peptidase_C15-like_sf"/>
</dbReference>
<dbReference type="InterPro" id="IPR033694">
    <property type="entry name" value="PGPEP1_Cys_AS"/>
</dbReference>
<dbReference type="InterPro" id="IPR033693">
    <property type="entry name" value="PGPEP1_Glu_AS"/>
</dbReference>
<dbReference type="PANTHER" id="PTHR23402">
    <property type="entry name" value="PROTEASE FAMILY C15 PYROGLUTAMYL-PEPTIDASE I-RELATED"/>
    <property type="match status" value="1"/>
</dbReference>
<dbReference type="PANTHER" id="PTHR23402:SF16">
    <property type="entry name" value="PYROGLUTAMYL-PEPTIDASE 1"/>
    <property type="match status" value="1"/>
</dbReference>
<dbReference type="Pfam" id="PF01470">
    <property type="entry name" value="Peptidase_C15"/>
    <property type="match status" value="1"/>
</dbReference>
<dbReference type="PIRSF" id="PIRSF015592">
    <property type="entry name" value="Prld-crbxl_pptds"/>
    <property type="match status" value="1"/>
</dbReference>
<dbReference type="PRINTS" id="PR00706">
    <property type="entry name" value="PYROGLUPTASE"/>
</dbReference>
<dbReference type="SUPFAM" id="SSF53182">
    <property type="entry name" value="Pyrrolidone carboxyl peptidase (pyroglutamate aminopeptidase)"/>
    <property type="match status" value="1"/>
</dbReference>
<dbReference type="PROSITE" id="PS01334">
    <property type="entry name" value="PYRASE_CYS"/>
    <property type="match status" value="1"/>
</dbReference>
<dbReference type="PROSITE" id="PS01333">
    <property type="entry name" value="PYRASE_GLU"/>
    <property type="match status" value="1"/>
</dbReference>
<accession>Q9ESW8</accession>
<sequence length="209" mass="22934">MEQPRKAVVVTGFGPFGEHTVNASWIAVQELEKLGLGDSVDLHVYEIPVEYQTVQRLIPALWEKHSPQLVVHVGVSGMATTVTLEKCGHNKGYKGLDNCRFCPGSQCCVEDGPESIDSIIDMDAVCKRVTTLGLDVSVTISQDAGRYLCDFTYYTSLYQGRGRSAFVHVPPLGKPYNADQLGRALRAIIEEMLGVLEQAEGDISCCRQL</sequence>
<proteinExistence type="evidence at protein level"/>
<gene>
    <name type="primary">Pgpep1</name>
    <name type="synonym">Pgpi</name>
</gene>
<evidence type="ECO:0000250" key="1"/>
<evidence type="ECO:0000255" key="2">
    <source>
        <dbReference type="PROSITE-ProRule" id="PRU10076"/>
    </source>
</evidence>
<evidence type="ECO:0000255" key="3">
    <source>
        <dbReference type="PROSITE-ProRule" id="PRU10077"/>
    </source>
</evidence>
<evidence type="ECO:0000305" key="4"/>
<name>PGPI_MOUSE</name>
<keyword id="KW-0963">Cytoplasm</keyword>
<keyword id="KW-0378">Hydrolase</keyword>
<keyword id="KW-0645">Protease</keyword>
<keyword id="KW-1185">Reference proteome</keyword>
<keyword id="KW-0788">Thiol protease</keyword>
<feature type="chain" id="PRO_0000184762" description="Pyroglutamyl-peptidase 1">
    <location>
        <begin position="1"/>
        <end position="209"/>
    </location>
</feature>
<feature type="active site" evidence="1">
    <location>
        <position position="85"/>
    </location>
</feature>
<feature type="active site" evidence="1">
    <location>
        <position position="149"/>
    </location>
</feature>
<feature type="active site" evidence="1">
    <location>
        <position position="168"/>
    </location>
</feature>
<reference key="1">
    <citation type="journal article" date="2003" name="Protein Expr. Purif.">
        <title>Pyroglutamyl-peptidase I: cloning, sequencing, and characterisation of the recombinant human enzyme.</title>
        <authorList>
            <person name="Dando P.M."/>
            <person name="Fortunato M."/>
            <person name="Strand G.B."/>
            <person name="Smith T.S."/>
            <person name="Barrett A.J."/>
        </authorList>
    </citation>
    <scope>NUCLEOTIDE SEQUENCE [MRNA]</scope>
</reference>
<reference key="2">
    <citation type="journal article" date="2005" name="Science">
        <title>The transcriptional landscape of the mammalian genome.</title>
        <authorList>
            <person name="Carninci P."/>
            <person name="Kasukawa T."/>
            <person name="Katayama S."/>
            <person name="Gough J."/>
            <person name="Frith M.C."/>
            <person name="Maeda N."/>
            <person name="Oyama R."/>
            <person name="Ravasi T."/>
            <person name="Lenhard B."/>
            <person name="Wells C."/>
            <person name="Kodzius R."/>
            <person name="Shimokawa K."/>
            <person name="Bajic V.B."/>
            <person name="Brenner S.E."/>
            <person name="Batalov S."/>
            <person name="Forrest A.R."/>
            <person name="Zavolan M."/>
            <person name="Davis M.J."/>
            <person name="Wilming L.G."/>
            <person name="Aidinis V."/>
            <person name="Allen J.E."/>
            <person name="Ambesi-Impiombato A."/>
            <person name="Apweiler R."/>
            <person name="Aturaliya R.N."/>
            <person name="Bailey T.L."/>
            <person name="Bansal M."/>
            <person name="Baxter L."/>
            <person name="Beisel K.W."/>
            <person name="Bersano T."/>
            <person name="Bono H."/>
            <person name="Chalk A.M."/>
            <person name="Chiu K.P."/>
            <person name="Choudhary V."/>
            <person name="Christoffels A."/>
            <person name="Clutterbuck D.R."/>
            <person name="Crowe M.L."/>
            <person name="Dalla E."/>
            <person name="Dalrymple B.P."/>
            <person name="de Bono B."/>
            <person name="Della Gatta G."/>
            <person name="di Bernardo D."/>
            <person name="Down T."/>
            <person name="Engstrom P."/>
            <person name="Fagiolini M."/>
            <person name="Faulkner G."/>
            <person name="Fletcher C.F."/>
            <person name="Fukushima T."/>
            <person name="Furuno M."/>
            <person name="Futaki S."/>
            <person name="Gariboldi M."/>
            <person name="Georgii-Hemming P."/>
            <person name="Gingeras T.R."/>
            <person name="Gojobori T."/>
            <person name="Green R.E."/>
            <person name="Gustincich S."/>
            <person name="Harbers M."/>
            <person name="Hayashi Y."/>
            <person name="Hensch T.K."/>
            <person name="Hirokawa N."/>
            <person name="Hill D."/>
            <person name="Huminiecki L."/>
            <person name="Iacono M."/>
            <person name="Ikeo K."/>
            <person name="Iwama A."/>
            <person name="Ishikawa T."/>
            <person name="Jakt M."/>
            <person name="Kanapin A."/>
            <person name="Katoh M."/>
            <person name="Kawasawa Y."/>
            <person name="Kelso J."/>
            <person name="Kitamura H."/>
            <person name="Kitano H."/>
            <person name="Kollias G."/>
            <person name="Krishnan S.P."/>
            <person name="Kruger A."/>
            <person name="Kummerfeld S.K."/>
            <person name="Kurochkin I.V."/>
            <person name="Lareau L.F."/>
            <person name="Lazarevic D."/>
            <person name="Lipovich L."/>
            <person name="Liu J."/>
            <person name="Liuni S."/>
            <person name="McWilliam S."/>
            <person name="Madan Babu M."/>
            <person name="Madera M."/>
            <person name="Marchionni L."/>
            <person name="Matsuda H."/>
            <person name="Matsuzawa S."/>
            <person name="Miki H."/>
            <person name="Mignone F."/>
            <person name="Miyake S."/>
            <person name="Morris K."/>
            <person name="Mottagui-Tabar S."/>
            <person name="Mulder N."/>
            <person name="Nakano N."/>
            <person name="Nakauchi H."/>
            <person name="Ng P."/>
            <person name="Nilsson R."/>
            <person name="Nishiguchi S."/>
            <person name="Nishikawa S."/>
            <person name="Nori F."/>
            <person name="Ohara O."/>
            <person name="Okazaki Y."/>
            <person name="Orlando V."/>
            <person name="Pang K.C."/>
            <person name="Pavan W.J."/>
            <person name="Pavesi G."/>
            <person name="Pesole G."/>
            <person name="Petrovsky N."/>
            <person name="Piazza S."/>
            <person name="Reed J."/>
            <person name="Reid J.F."/>
            <person name="Ring B.Z."/>
            <person name="Ringwald M."/>
            <person name="Rost B."/>
            <person name="Ruan Y."/>
            <person name="Salzberg S.L."/>
            <person name="Sandelin A."/>
            <person name="Schneider C."/>
            <person name="Schoenbach C."/>
            <person name="Sekiguchi K."/>
            <person name="Semple C.A."/>
            <person name="Seno S."/>
            <person name="Sessa L."/>
            <person name="Sheng Y."/>
            <person name="Shibata Y."/>
            <person name="Shimada H."/>
            <person name="Shimada K."/>
            <person name="Silva D."/>
            <person name="Sinclair B."/>
            <person name="Sperling S."/>
            <person name="Stupka E."/>
            <person name="Sugiura K."/>
            <person name="Sultana R."/>
            <person name="Takenaka Y."/>
            <person name="Taki K."/>
            <person name="Tammoja K."/>
            <person name="Tan S.L."/>
            <person name="Tang S."/>
            <person name="Taylor M.S."/>
            <person name="Tegner J."/>
            <person name="Teichmann S.A."/>
            <person name="Ueda H.R."/>
            <person name="van Nimwegen E."/>
            <person name="Verardo R."/>
            <person name="Wei C.L."/>
            <person name="Yagi K."/>
            <person name="Yamanishi H."/>
            <person name="Zabarovsky E."/>
            <person name="Zhu S."/>
            <person name="Zimmer A."/>
            <person name="Hide W."/>
            <person name="Bult C."/>
            <person name="Grimmond S.M."/>
            <person name="Teasdale R.D."/>
            <person name="Liu E.T."/>
            <person name="Brusic V."/>
            <person name="Quackenbush J."/>
            <person name="Wahlestedt C."/>
            <person name="Mattick J.S."/>
            <person name="Hume D.A."/>
            <person name="Kai C."/>
            <person name="Sasaki D."/>
            <person name="Tomaru Y."/>
            <person name="Fukuda S."/>
            <person name="Kanamori-Katayama M."/>
            <person name="Suzuki M."/>
            <person name="Aoki J."/>
            <person name="Arakawa T."/>
            <person name="Iida J."/>
            <person name="Imamura K."/>
            <person name="Itoh M."/>
            <person name="Kato T."/>
            <person name="Kawaji H."/>
            <person name="Kawagashira N."/>
            <person name="Kawashima T."/>
            <person name="Kojima M."/>
            <person name="Kondo S."/>
            <person name="Konno H."/>
            <person name="Nakano K."/>
            <person name="Ninomiya N."/>
            <person name="Nishio T."/>
            <person name="Okada M."/>
            <person name="Plessy C."/>
            <person name="Shibata K."/>
            <person name="Shiraki T."/>
            <person name="Suzuki S."/>
            <person name="Tagami M."/>
            <person name="Waki K."/>
            <person name="Watahiki A."/>
            <person name="Okamura-Oho Y."/>
            <person name="Suzuki H."/>
            <person name="Kawai J."/>
            <person name="Hayashizaki Y."/>
        </authorList>
    </citation>
    <scope>NUCLEOTIDE SEQUENCE [LARGE SCALE MRNA]</scope>
    <source>
        <strain>C57BL/6J</strain>
        <tissue>Embryo</tissue>
        <tissue>Head</tissue>
        <tissue>Spinal cord</tissue>
    </source>
</reference>
<reference key="3">
    <citation type="journal article" date="2004" name="Genome Res.">
        <title>The status, quality, and expansion of the NIH full-length cDNA project: the Mammalian Gene Collection (MGC).</title>
        <authorList>
            <consortium name="The MGC Project Team"/>
        </authorList>
    </citation>
    <scope>NUCLEOTIDE SEQUENCE [LARGE SCALE MRNA]</scope>
    <source>
        <strain>C57BL/6J</strain>
        <tissue>Brain</tissue>
    </source>
</reference>
<reference key="4">
    <citation type="journal article" date="2010" name="Cell">
        <title>A tissue-specific atlas of mouse protein phosphorylation and expression.</title>
        <authorList>
            <person name="Huttlin E.L."/>
            <person name="Jedrychowski M.P."/>
            <person name="Elias J.E."/>
            <person name="Goswami T."/>
            <person name="Rad R."/>
            <person name="Beausoleil S.A."/>
            <person name="Villen J."/>
            <person name="Haas W."/>
            <person name="Sowa M.E."/>
            <person name="Gygi S.P."/>
        </authorList>
    </citation>
    <scope>IDENTIFICATION BY MASS SPECTROMETRY [LARGE SCALE ANALYSIS]</scope>
    <source>
        <tissue>Heart</tissue>
        <tissue>Kidney</tissue>
        <tissue>Liver</tissue>
        <tissue>Lung</tissue>
        <tissue>Pancreas</tissue>
        <tissue>Spleen</tissue>
    </source>
</reference>
<comment type="function">
    <text evidence="1">Removes 5-oxoproline from various penultimate amino acid residues except L-proline.</text>
</comment>
<comment type="catalytic activity">
    <reaction evidence="2 3">
        <text>Release of an N-terminal pyroglutamyl group from a polypeptide, the second amino acid generally not being Pro.</text>
        <dbReference type="EC" id="3.4.19.3"/>
    </reaction>
</comment>
<comment type="subunit">
    <text evidence="1">Monomer.</text>
</comment>
<comment type="subcellular location">
    <subcellularLocation>
        <location evidence="1">Cytoplasm</location>
    </subcellularLocation>
</comment>
<comment type="similarity">
    <text evidence="4">Belongs to the peptidase C15 family.</text>
</comment>
<protein>
    <recommendedName>
        <fullName>Pyroglutamyl-peptidase 1</fullName>
        <ecNumber>3.4.19.3</ecNumber>
    </recommendedName>
    <alternativeName>
        <fullName>5-oxoprolyl-peptidase</fullName>
    </alternativeName>
    <alternativeName>
        <fullName>Pyroglutamyl aminopeptidase I</fullName>
        <shortName>PAP-I</shortName>
    </alternativeName>
    <alternativeName>
        <fullName>Pyroglutamyl-peptidase I</fullName>
        <shortName>PGP-I</shortName>
    </alternativeName>
    <alternativeName>
        <fullName>Pyrrolidone-carboxylate peptidase</fullName>
    </alternativeName>
</protein>